<accession>Q6DGF6</accession>
<feature type="chain" id="PRO_0000321926" description="Protein FAM220A">
    <location>
        <begin position="1"/>
        <end position="259"/>
    </location>
</feature>
<feature type="region of interest" description="Disordered" evidence="2">
    <location>
        <begin position="29"/>
        <end position="66"/>
    </location>
</feature>
<feature type="compositionally biased region" description="Polar residues" evidence="2">
    <location>
        <begin position="39"/>
        <end position="49"/>
    </location>
</feature>
<keyword id="KW-0963">Cytoplasm</keyword>
<keyword id="KW-0968">Cytoplasmic vesicle</keyword>
<keyword id="KW-0539">Nucleus</keyword>
<keyword id="KW-1185">Reference proteome</keyword>
<organism>
    <name type="scientific">Rattus norvegicus</name>
    <name type="common">Rat</name>
    <dbReference type="NCBI Taxonomy" id="10116"/>
    <lineage>
        <taxon>Eukaryota</taxon>
        <taxon>Metazoa</taxon>
        <taxon>Chordata</taxon>
        <taxon>Craniata</taxon>
        <taxon>Vertebrata</taxon>
        <taxon>Euteleostomi</taxon>
        <taxon>Mammalia</taxon>
        <taxon>Eutheria</taxon>
        <taxon>Euarchontoglires</taxon>
        <taxon>Glires</taxon>
        <taxon>Rodentia</taxon>
        <taxon>Myomorpha</taxon>
        <taxon>Muroidea</taxon>
        <taxon>Muridae</taxon>
        <taxon>Murinae</taxon>
        <taxon>Rattus</taxon>
    </lineage>
</organism>
<dbReference type="EMBL" id="BC076392">
    <property type="protein sequence ID" value="AAH76392.1"/>
    <property type="molecule type" value="mRNA"/>
</dbReference>
<dbReference type="RefSeq" id="NP_001017485.1">
    <property type="nucleotide sequence ID" value="NM_001017485.2"/>
</dbReference>
<dbReference type="FunCoup" id="Q6DGF6">
    <property type="interactions" value="33"/>
</dbReference>
<dbReference type="STRING" id="10116.ENSRNOP00000059765"/>
<dbReference type="PhosphoSitePlus" id="Q6DGF6"/>
<dbReference type="PaxDb" id="10116-ENSRNOP00000059765"/>
<dbReference type="Ensembl" id="ENSRNOT00000029692.7">
    <property type="protein sequence ID" value="ENSRNOP00000059765.1"/>
    <property type="gene ID" value="ENSRNOG00000024605.7"/>
</dbReference>
<dbReference type="Ensembl" id="ENSRNOT00000102797.1">
    <property type="protein sequence ID" value="ENSRNOP00000078852.1"/>
    <property type="gene ID" value="ENSRNOG00000024605.7"/>
</dbReference>
<dbReference type="GeneID" id="498145"/>
<dbReference type="KEGG" id="rno:498145"/>
<dbReference type="AGR" id="RGD:1561923"/>
<dbReference type="CTD" id="84792"/>
<dbReference type="RGD" id="1561923">
    <property type="gene designation" value="Fam220a"/>
</dbReference>
<dbReference type="eggNOG" id="ENOG502S2EY">
    <property type="taxonomic scope" value="Eukaryota"/>
</dbReference>
<dbReference type="GeneTree" id="ENSGT00390000014156"/>
<dbReference type="HOGENOM" id="CLU_089176_0_0_1"/>
<dbReference type="InParanoid" id="Q6DGF6"/>
<dbReference type="OMA" id="CHKGEPW"/>
<dbReference type="OrthoDB" id="69634at9989"/>
<dbReference type="PhylomeDB" id="Q6DGF6"/>
<dbReference type="TreeFam" id="TF336869"/>
<dbReference type="PRO" id="PR:Q6DGF6"/>
<dbReference type="Proteomes" id="UP000002494">
    <property type="component" value="Chromosome 12"/>
</dbReference>
<dbReference type="Bgee" id="ENSRNOG00000024605">
    <property type="expression patterns" value="Expressed in testis and 20 other cell types or tissues"/>
</dbReference>
<dbReference type="GO" id="GO:0001669">
    <property type="term" value="C:acrosomal vesicle"/>
    <property type="evidence" value="ECO:0000250"/>
    <property type="project" value="UniProtKB"/>
</dbReference>
<dbReference type="GO" id="GO:0005737">
    <property type="term" value="C:cytoplasm"/>
    <property type="evidence" value="ECO:0000266"/>
    <property type="project" value="RGD"/>
</dbReference>
<dbReference type="GO" id="GO:0005634">
    <property type="term" value="C:nucleus"/>
    <property type="evidence" value="ECO:0000266"/>
    <property type="project" value="RGD"/>
</dbReference>
<dbReference type="GO" id="GO:0097677">
    <property type="term" value="F:STAT family protein binding"/>
    <property type="evidence" value="ECO:0000266"/>
    <property type="project" value="RGD"/>
</dbReference>
<dbReference type="GO" id="GO:0035556">
    <property type="term" value="P:intracellular signal transduction"/>
    <property type="evidence" value="ECO:0000266"/>
    <property type="project" value="RGD"/>
</dbReference>
<dbReference type="GO" id="GO:0000122">
    <property type="term" value="P:negative regulation of transcription by RNA polymerase II"/>
    <property type="evidence" value="ECO:0000266"/>
    <property type="project" value="RGD"/>
</dbReference>
<dbReference type="InterPro" id="IPR040355">
    <property type="entry name" value="FAM220A"/>
</dbReference>
<dbReference type="InterPro" id="IPR029155">
    <property type="entry name" value="SIPAR"/>
</dbReference>
<dbReference type="PANTHER" id="PTHR31980">
    <property type="entry name" value="PROTEIN FAM220A"/>
    <property type="match status" value="1"/>
</dbReference>
<dbReference type="PANTHER" id="PTHR31980:SF1">
    <property type="entry name" value="PROTEIN FAM220A"/>
    <property type="match status" value="1"/>
</dbReference>
<dbReference type="Pfam" id="PF15487">
    <property type="entry name" value="FAM220"/>
    <property type="match status" value="1"/>
</dbReference>
<proteinExistence type="evidence at transcript level"/>
<name>F220A_RAT</name>
<gene>
    <name type="primary">Fam220a</name>
    <name type="synonym">Sipar</name>
</gene>
<sequence>MRAGRGTLGVCLASVKQSQGGDLDKLACGLKRRSEKRNPSPSDVPSWTDQPVADTHGKSRAMAAASSEMKRDQSKASLILHSGFKALQYLKESMGRNSTPAASLSMAVVLSSAPSEEHGAGVSGGIGDTLGSDWPAREPRTTDSCGQYLKGEAWVSGWQGHPKVREVGFLRGEPLSAVPKGLGTRSELSYCSELCQLPYTYPYYEALPEDKTRCVSLDHLSPVFSEETVEDEKTLSSTSDGLQIVMGLLALQSSRLTSL</sequence>
<evidence type="ECO:0000250" key="1">
    <source>
        <dbReference type="UniProtKB" id="Q3ZN08"/>
    </source>
</evidence>
<evidence type="ECO:0000256" key="2">
    <source>
        <dbReference type="SAM" id="MobiDB-lite"/>
    </source>
</evidence>
<comment type="function">
    <text evidence="1">Promotes dephosphorylation of transcriptional activator STAT3 by interacting with both STAT3 and protein phosphatase PTPN2. This promotes interaction of PTPN2 with STAT3 and mediates STAT3 dephosphorylation by PTPN2, leading to negative regulation of STAT3 transcriptional activator activity. May be required for spermiogenesis or sperm function.</text>
</comment>
<comment type="subunit">
    <text evidence="1">Interacts with transcriptional activator STAT3; the interaction occurs in both the nucleus and the cytoplasm, is enhanced by IL6 and promotes STAT3 dephosphorylation, leading to negative regulation of STAT3 transcriptional activator activity. Can interact with both unphosphorylated and phosphorylated STAT3 but interacts preferentially with phosphorylated STAT3 in the nucleus. Interacts with protein phosphatase PTPN2/TC45; this promotes interaction of PTPN2 with STAT3, leading to dephosphorylation of STAT3 by PTPN2.</text>
</comment>
<comment type="subcellular location">
    <subcellularLocation>
        <location evidence="1">Nucleus</location>
    </subcellularLocation>
    <subcellularLocation>
        <location evidence="1">Cytoplasm</location>
    </subcellularLocation>
    <subcellularLocation>
        <location evidence="1">Cytoplasmic vesicle</location>
        <location evidence="1">Secretory vesicle</location>
        <location evidence="1">Acrosome</location>
    </subcellularLocation>
    <text evidence="1">Localizes to both nucleus and cytoplasm but located predominantly in the nucleus. Detected in the sperm acrosome prior to the acrosome reaction and is likely to be released from acrosome-reacted sperm.</text>
</comment>
<protein>
    <recommendedName>
        <fullName>Protein FAM220A</fullName>
    </recommendedName>
    <alternativeName>
        <fullName>STAT3-interacting protein as a repressor</fullName>
    </alternativeName>
</protein>
<reference key="1">
    <citation type="journal article" date="2004" name="Genome Res.">
        <title>The status, quality, and expansion of the NIH full-length cDNA project: the Mammalian Gene Collection (MGC).</title>
        <authorList>
            <consortium name="The MGC Project Team"/>
        </authorList>
    </citation>
    <scope>NUCLEOTIDE SEQUENCE [LARGE SCALE MRNA]</scope>
    <source>
        <tissue>Kidney</tissue>
    </source>
</reference>